<sequence>MNSIKNHLMCEEIHKRFHLHPKVREAMESIEREVFVPAPFKHFAYTLNALSMQAQQYISSPLTVAKMTQYLEIDHVDSVLEIGCGSGYQAAVLSQIFRRVFSVERIESLYLEARLRLKTLGLDNVHVKFADGNKGWEQYAPYDRILFSACAKNIPQALIDQLEEGGILVAPIQENNEQVIKRFVKQNNALRVQKVLEKCSFVPVVDGVQ</sequence>
<keyword id="KW-0963">Cytoplasm</keyword>
<keyword id="KW-0489">Methyltransferase</keyword>
<keyword id="KW-0949">S-adenosyl-L-methionine</keyword>
<keyword id="KW-0808">Transferase</keyword>
<reference key="1">
    <citation type="submission" date="2008-10" db="EMBL/GenBank/DDBJ databases">
        <title>The complete genome sequence of Helicobacter pylori strain P12.</title>
        <authorList>
            <person name="Fischer W."/>
            <person name="Windhager L."/>
            <person name="Karnholz A."/>
            <person name="Zeiller M."/>
            <person name="Zimmer R."/>
            <person name="Haas R."/>
        </authorList>
    </citation>
    <scope>NUCLEOTIDE SEQUENCE [LARGE SCALE GENOMIC DNA]</scope>
    <source>
        <strain>P12</strain>
    </source>
</reference>
<comment type="function">
    <text evidence="1">Catalyzes the methyl esterification of L-isoaspartyl residues in peptides and proteins that result from spontaneous decomposition of normal L-aspartyl and L-asparaginyl residues. It plays a role in the repair and/or degradation of damaged proteins.</text>
</comment>
<comment type="catalytic activity">
    <reaction evidence="1">
        <text>[protein]-L-isoaspartate + S-adenosyl-L-methionine = [protein]-L-isoaspartate alpha-methyl ester + S-adenosyl-L-homocysteine</text>
        <dbReference type="Rhea" id="RHEA:12705"/>
        <dbReference type="Rhea" id="RHEA-COMP:12143"/>
        <dbReference type="Rhea" id="RHEA-COMP:12144"/>
        <dbReference type="ChEBI" id="CHEBI:57856"/>
        <dbReference type="ChEBI" id="CHEBI:59789"/>
        <dbReference type="ChEBI" id="CHEBI:90596"/>
        <dbReference type="ChEBI" id="CHEBI:90598"/>
        <dbReference type="EC" id="2.1.1.77"/>
    </reaction>
</comment>
<comment type="subcellular location">
    <subcellularLocation>
        <location evidence="1">Cytoplasm</location>
    </subcellularLocation>
</comment>
<comment type="similarity">
    <text evidence="1">Belongs to the methyltransferase superfamily. L-isoaspartyl/D-aspartyl protein methyltransferase family.</text>
</comment>
<organism>
    <name type="scientific">Helicobacter pylori (strain P12)</name>
    <dbReference type="NCBI Taxonomy" id="570508"/>
    <lineage>
        <taxon>Bacteria</taxon>
        <taxon>Pseudomonadati</taxon>
        <taxon>Campylobacterota</taxon>
        <taxon>Epsilonproteobacteria</taxon>
        <taxon>Campylobacterales</taxon>
        <taxon>Helicobacteraceae</taxon>
        <taxon>Helicobacter</taxon>
    </lineage>
</organism>
<proteinExistence type="inferred from homology"/>
<evidence type="ECO:0000255" key="1">
    <source>
        <dbReference type="HAMAP-Rule" id="MF_00090"/>
    </source>
</evidence>
<accession>B6JMT1</accession>
<protein>
    <recommendedName>
        <fullName evidence="1">Protein-L-isoaspartate O-methyltransferase</fullName>
        <ecNumber evidence="1">2.1.1.77</ecNumber>
    </recommendedName>
    <alternativeName>
        <fullName evidence="1">L-isoaspartyl protein carboxyl methyltransferase</fullName>
    </alternativeName>
    <alternativeName>
        <fullName evidence="1">Protein L-isoaspartyl methyltransferase</fullName>
    </alternativeName>
    <alternativeName>
        <fullName evidence="1">Protein-beta-aspartate methyltransferase</fullName>
        <shortName evidence="1">PIMT</shortName>
    </alternativeName>
</protein>
<dbReference type="EC" id="2.1.1.77" evidence="1"/>
<dbReference type="EMBL" id="CP001217">
    <property type="protein sequence ID" value="ACJ08209.1"/>
    <property type="molecule type" value="Genomic_DNA"/>
</dbReference>
<dbReference type="SMR" id="B6JMT1"/>
<dbReference type="KEGG" id="hpp:HPP12_1057"/>
<dbReference type="HOGENOM" id="CLU_055432_2_0_7"/>
<dbReference type="Proteomes" id="UP000008198">
    <property type="component" value="Chromosome"/>
</dbReference>
<dbReference type="GO" id="GO:0005737">
    <property type="term" value="C:cytoplasm"/>
    <property type="evidence" value="ECO:0007669"/>
    <property type="project" value="UniProtKB-SubCell"/>
</dbReference>
<dbReference type="GO" id="GO:0004719">
    <property type="term" value="F:protein-L-isoaspartate (D-aspartate) O-methyltransferase activity"/>
    <property type="evidence" value="ECO:0007669"/>
    <property type="project" value="UniProtKB-UniRule"/>
</dbReference>
<dbReference type="GO" id="GO:0032259">
    <property type="term" value="P:methylation"/>
    <property type="evidence" value="ECO:0007669"/>
    <property type="project" value="UniProtKB-KW"/>
</dbReference>
<dbReference type="GO" id="GO:0036211">
    <property type="term" value="P:protein modification process"/>
    <property type="evidence" value="ECO:0007669"/>
    <property type="project" value="UniProtKB-UniRule"/>
</dbReference>
<dbReference type="GO" id="GO:0030091">
    <property type="term" value="P:protein repair"/>
    <property type="evidence" value="ECO:0007669"/>
    <property type="project" value="UniProtKB-UniRule"/>
</dbReference>
<dbReference type="CDD" id="cd02440">
    <property type="entry name" value="AdoMet_MTases"/>
    <property type="match status" value="1"/>
</dbReference>
<dbReference type="FunFam" id="3.40.50.150:FF:000010">
    <property type="entry name" value="Protein-L-isoaspartate O-methyltransferase"/>
    <property type="match status" value="1"/>
</dbReference>
<dbReference type="Gene3D" id="3.40.50.150">
    <property type="entry name" value="Vaccinia Virus protein VP39"/>
    <property type="match status" value="1"/>
</dbReference>
<dbReference type="HAMAP" id="MF_00090">
    <property type="entry name" value="PIMT"/>
    <property type="match status" value="1"/>
</dbReference>
<dbReference type="InterPro" id="IPR000682">
    <property type="entry name" value="PCMT"/>
</dbReference>
<dbReference type="InterPro" id="IPR029063">
    <property type="entry name" value="SAM-dependent_MTases_sf"/>
</dbReference>
<dbReference type="NCBIfam" id="TIGR00080">
    <property type="entry name" value="pimt"/>
    <property type="match status" value="1"/>
</dbReference>
<dbReference type="NCBIfam" id="NF001453">
    <property type="entry name" value="PRK00312.1"/>
    <property type="match status" value="1"/>
</dbReference>
<dbReference type="PANTHER" id="PTHR11579">
    <property type="entry name" value="PROTEIN-L-ISOASPARTATE O-METHYLTRANSFERASE"/>
    <property type="match status" value="1"/>
</dbReference>
<dbReference type="PANTHER" id="PTHR11579:SF0">
    <property type="entry name" value="PROTEIN-L-ISOASPARTATE(D-ASPARTATE) O-METHYLTRANSFERASE"/>
    <property type="match status" value="1"/>
</dbReference>
<dbReference type="Pfam" id="PF01135">
    <property type="entry name" value="PCMT"/>
    <property type="match status" value="1"/>
</dbReference>
<dbReference type="SUPFAM" id="SSF53335">
    <property type="entry name" value="S-adenosyl-L-methionine-dependent methyltransferases"/>
    <property type="match status" value="1"/>
</dbReference>
<dbReference type="PROSITE" id="PS01279">
    <property type="entry name" value="PCMT"/>
    <property type="match status" value="1"/>
</dbReference>
<name>PIMT_HELP2</name>
<gene>
    <name evidence="1" type="primary">pcm</name>
    <name type="ordered locus">HPP12_1057</name>
</gene>
<feature type="chain" id="PRO_1000093256" description="Protein-L-isoaspartate O-methyltransferase">
    <location>
        <begin position="1"/>
        <end position="209"/>
    </location>
</feature>
<feature type="active site" evidence="1">
    <location>
        <position position="59"/>
    </location>
</feature>